<organism>
    <name type="scientific">Chlorobaculum tepidum (strain ATCC 49652 / DSM 12025 / NBRC 103806 / TLS)</name>
    <name type="common">Chlorobium tepidum</name>
    <dbReference type="NCBI Taxonomy" id="194439"/>
    <lineage>
        <taxon>Bacteria</taxon>
        <taxon>Pseudomonadati</taxon>
        <taxon>Chlorobiota</taxon>
        <taxon>Chlorobiia</taxon>
        <taxon>Chlorobiales</taxon>
        <taxon>Chlorobiaceae</taxon>
        <taxon>Chlorobaculum</taxon>
    </lineage>
</organism>
<dbReference type="EMBL" id="AE006470">
    <property type="protein sequence ID" value="AAM73404.1"/>
    <property type="molecule type" value="Genomic_DNA"/>
</dbReference>
<dbReference type="RefSeq" id="NP_663062.1">
    <property type="nucleotide sequence ID" value="NC_002932.3"/>
</dbReference>
<dbReference type="RefSeq" id="WP_010933841.1">
    <property type="nucleotide sequence ID" value="NC_002932.3"/>
</dbReference>
<dbReference type="SMR" id="Q8KAH3"/>
<dbReference type="STRING" id="194439.CT2188"/>
<dbReference type="EnsemblBacteria" id="AAM73404">
    <property type="protein sequence ID" value="AAM73404"/>
    <property type="gene ID" value="CT2188"/>
</dbReference>
<dbReference type="KEGG" id="cte:CT2188"/>
<dbReference type="PATRIC" id="fig|194439.7.peg.1987"/>
<dbReference type="eggNOG" id="COG0088">
    <property type="taxonomic scope" value="Bacteria"/>
</dbReference>
<dbReference type="HOGENOM" id="CLU_041575_5_2_10"/>
<dbReference type="OrthoDB" id="9803201at2"/>
<dbReference type="Proteomes" id="UP000001007">
    <property type="component" value="Chromosome"/>
</dbReference>
<dbReference type="GO" id="GO:1990904">
    <property type="term" value="C:ribonucleoprotein complex"/>
    <property type="evidence" value="ECO:0007669"/>
    <property type="project" value="UniProtKB-KW"/>
</dbReference>
<dbReference type="GO" id="GO:0005840">
    <property type="term" value="C:ribosome"/>
    <property type="evidence" value="ECO:0007669"/>
    <property type="project" value="UniProtKB-KW"/>
</dbReference>
<dbReference type="GO" id="GO:0019843">
    <property type="term" value="F:rRNA binding"/>
    <property type="evidence" value="ECO:0007669"/>
    <property type="project" value="UniProtKB-UniRule"/>
</dbReference>
<dbReference type="GO" id="GO:0003735">
    <property type="term" value="F:structural constituent of ribosome"/>
    <property type="evidence" value="ECO:0007669"/>
    <property type="project" value="InterPro"/>
</dbReference>
<dbReference type="GO" id="GO:0006412">
    <property type="term" value="P:translation"/>
    <property type="evidence" value="ECO:0007669"/>
    <property type="project" value="UniProtKB-UniRule"/>
</dbReference>
<dbReference type="Gene3D" id="3.40.1370.10">
    <property type="match status" value="1"/>
</dbReference>
<dbReference type="HAMAP" id="MF_01328_B">
    <property type="entry name" value="Ribosomal_uL4_B"/>
    <property type="match status" value="1"/>
</dbReference>
<dbReference type="InterPro" id="IPR002136">
    <property type="entry name" value="Ribosomal_uL4"/>
</dbReference>
<dbReference type="InterPro" id="IPR013005">
    <property type="entry name" value="Ribosomal_uL4-like"/>
</dbReference>
<dbReference type="InterPro" id="IPR023574">
    <property type="entry name" value="Ribosomal_uL4_dom_sf"/>
</dbReference>
<dbReference type="NCBIfam" id="TIGR03953">
    <property type="entry name" value="rplD_bact"/>
    <property type="match status" value="1"/>
</dbReference>
<dbReference type="PANTHER" id="PTHR10746">
    <property type="entry name" value="50S RIBOSOMAL PROTEIN L4"/>
    <property type="match status" value="1"/>
</dbReference>
<dbReference type="PANTHER" id="PTHR10746:SF6">
    <property type="entry name" value="LARGE RIBOSOMAL SUBUNIT PROTEIN UL4M"/>
    <property type="match status" value="1"/>
</dbReference>
<dbReference type="Pfam" id="PF00573">
    <property type="entry name" value="Ribosomal_L4"/>
    <property type="match status" value="1"/>
</dbReference>
<dbReference type="SUPFAM" id="SSF52166">
    <property type="entry name" value="Ribosomal protein L4"/>
    <property type="match status" value="1"/>
</dbReference>
<evidence type="ECO:0000255" key="1">
    <source>
        <dbReference type="HAMAP-Rule" id="MF_01328"/>
    </source>
</evidence>
<evidence type="ECO:0000256" key="2">
    <source>
        <dbReference type="SAM" id="MobiDB-lite"/>
    </source>
</evidence>
<evidence type="ECO:0000305" key="3"/>
<name>RL4_CHLTE</name>
<sequence>MELKVLNIQGAETGEVVTLNDEIFAVEVSEHAMYLDVKAILANRRQGTHKAKTRAEVRGGGKKPFRQKGTGNARQGSTRSGLMVGGGAIFGPQPRTYDQKVNRKVKQLARRSALSAKAAAGQIVVVDDFSFEAIKTRPVADMLKNLGLAEKKTLLMMPHHDNVVSTSGRNIEKLNVMVADQASTYDILNSQVVLFQKGALQKIEETLG</sequence>
<reference key="1">
    <citation type="journal article" date="2002" name="Proc. Natl. Acad. Sci. U.S.A.">
        <title>The complete genome sequence of Chlorobium tepidum TLS, a photosynthetic, anaerobic, green-sulfur bacterium.</title>
        <authorList>
            <person name="Eisen J.A."/>
            <person name="Nelson K.E."/>
            <person name="Paulsen I.T."/>
            <person name="Heidelberg J.F."/>
            <person name="Wu M."/>
            <person name="Dodson R.J."/>
            <person name="DeBoy R.T."/>
            <person name="Gwinn M.L."/>
            <person name="Nelson W.C."/>
            <person name="Haft D.H."/>
            <person name="Hickey E.K."/>
            <person name="Peterson J.D."/>
            <person name="Durkin A.S."/>
            <person name="Kolonay J.F."/>
            <person name="Yang F."/>
            <person name="Holt I.E."/>
            <person name="Umayam L.A."/>
            <person name="Mason T.M."/>
            <person name="Brenner M."/>
            <person name="Shea T.P."/>
            <person name="Parksey D.S."/>
            <person name="Nierman W.C."/>
            <person name="Feldblyum T.V."/>
            <person name="Hansen C.L."/>
            <person name="Craven M.B."/>
            <person name="Radune D."/>
            <person name="Vamathevan J.J."/>
            <person name="Khouri H.M."/>
            <person name="White O."/>
            <person name="Gruber T.M."/>
            <person name="Ketchum K.A."/>
            <person name="Venter J.C."/>
            <person name="Tettelin H."/>
            <person name="Bryant D.A."/>
            <person name="Fraser C.M."/>
        </authorList>
    </citation>
    <scope>NUCLEOTIDE SEQUENCE [LARGE SCALE GENOMIC DNA]</scope>
    <source>
        <strain>ATCC 49652 / DSM 12025 / NBRC 103806 / TLS</strain>
    </source>
</reference>
<protein>
    <recommendedName>
        <fullName evidence="1">Large ribosomal subunit protein uL4</fullName>
    </recommendedName>
    <alternativeName>
        <fullName evidence="3">50S ribosomal protein L4</fullName>
    </alternativeName>
</protein>
<gene>
    <name evidence="1" type="primary">rplD</name>
    <name type="ordered locus">CT2188</name>
</gene>
<keyword id="KW-1185">Reference proteome</keyword>
<keyword id="KW-0687">Ribonucleoprotein</keyword>
<keyword id="KW-0689">Ribosomal protein</keyword>
<keyword id="KW-0694">RNA-binding</keyword>
<keyword id="KW-0699">rRNA-binding</keyword>
<comment type="function">
    <text evidence="1">One of the primary rRNA binding proteins, this protein initially binds near the 5'-end of the 23S rRNA. It is important during the early stages of 50S assembly. It makes multiple contacts with different domains of the 23S rRNA in the assembled 50S subunit and ribosome.</text>
</comment>
<comment type="function">
    <text evidence="1">Forms part of the polypeptide exit tunnel.</text>
</comment>
<comment type="subunit">
    <text evidence="1">Part of the 50S ribosomal subunit.</text>
</comment>
<comment type="similarity">
    <text evidence="1">Belongs to the universal ribosomal protein uL4 family.</text>
</comment>
<feature type="chain" id="PRO_0000129204" description="Large ribosomal subunit protein uL4">
    <location>
        <begin position="1"/>
        <end position="208"/>
    </location>
</feature>
<feature type="region of interest" description="Disordered" evidence="2">
    <location>
        <begin position="49"/>
        <end position="78"/>
    </location>
</feature>
<feature type="compositionally biased region" description="Polar residues" evidence="2">
    <location>
        <begin position="69"/>
        <end position="78"/>
    </location>
</feature>
<proteinExistence type="inferred from homology"/>
<accession>Q8KAH3</accession>